<protein>
    <recommendedName>
        <fullName evidence="2">NADH-quinone oxidoreductase subunit B</fullName>
        <ecNumber evidence="2">7.1.1.-</ecNumber>
    </recommendedName>
    <alternativeName>
        <fullName evidence="2">NADH dehydrogenase I subunit B</fullName>
    </alternativeName>
    <alternativeName>
        <fullName evidence="2">NDH-1 subunit B</fullName>
    </alternativeName>
</protein>
<sequence>MVAINSNGFVTTTVEELLRWGRRNSLWPVTIGLACCAIEMMHTAASRFDLDRLGVIFRASPRQADVLIVAGTVVNKVAPMLKLIWDQMPDPKWCISMGGCASAGGPFPTYSTLQGVDRIIPVDVYIPGCPPTPQGLIYGILQLQRKIKEQGITKYDKLFADFNREIEKEGIFVPRELKV</sequence>
<dbReference type="EC" id="7.1.1.-" evidence="2"/>
<dbReference type="EMBL" id="AE000657">
    <property type="protein sequence ID" value="AAC07297.1"/>
    <property type="molecule type" value="Genomic_DNA"/>
</dbReference>
<dbReference type="PIR" id="C70413">
    <property type="entry name" value="C70413"/>
</dbReference>
<dbReference type="RefSeq" id="NP_213898.1">
    <property type="nucleotide sequence ID" value="NC_000918.1"/>
</dbReference>
<dbReference type="RefSeq" id="WP_010880836.1">
    <property type="nucleotide sequence ID" value="NC_000918.1"/>
</dbReference>
<dbReference type="PDB" id="7Q5Y">
    <property type="method" value="X-ray"/>
    <property type="resolution" value="2.70 A"/>
    <property type="chains" value="F/L/R/X=1-179"/>
</dbReference>
<dbReference type="PDBsum" id="7Q5Y"/>
<dbReference type="SMR" id="O67334"/>
<dbReference type="FunCoup" id="O67334">
    <property type="interactions" value="303"/>
</dbReference>
<dbReference type="STRING" id="224324.aq_1312"/>
<dbReference type="EnsemblBacteria" id="AAC07297">
    <property type="protein sequence ID" value="AAC07297"/>
    <property type="gene ID" value="aq_1312"/>
</dbReference>
<dbReference type="KEGG" id="aae:aq_1312"/>
<dbReference type="PATRIC" id="fig|224324.8.peg.1022"/>
<dbReference type="eggNOG" id="COG0377">
    <property type="taxonomic scope" value="Bacteria"/>
</dbReference>
<dbReference type="HOGENOM" id="CLU_055737_7_3_0"/>
<dbReference type="InParanoid" id="O67334"/>
<dbReference type="OrthoDB" id="9786737at2"/>
<dbReference type="Proteomes" id="UP000000798">
    <property type="component" value="Chromosome"/>
</dbReference>
<dbReference type="GO" id="GO:0005886">
    <property type="term" value="C:plasma membrane"/>
    <property type="evidence" value="ECO:0007669"/>
    <property type="project" value="UniProtKB-SubCell"/>
</dbReference>
<dbReference type="GO" id="GO:0045271">
    <property type="term" value="C:respiratory chain complex I"/>
    <property type="evidence" value="ECO:0000318"/>
    <property type="project" value="GO_Central"/>
</dbReference>
<dbReference type="GO" id="GO:0051539">
    <property type="term" value="F:4 iron, 4 sulfur cluster binding"/>
    <property type="evidence" value="ECO:0007669"/>
    <property type="project" value="UniProtKB-KW"/>
</dbReference>
<dbReference type="GO" id="GO:0005506">
    <property type="term" value="F:iron ion binding"/>
    <property type="evidence" value="ECO:0007669"/>
    <property type="project" value="UniProtKB-UniRule"/>
</dbReference>
<dbReference type="GO" id="GO:0008137">
    <property type="term" value="F:NADH dehydrogenase (ubiquinone) activity"/>
    <property type="evidence" value="ECO:0000318"/>
    <property type="project" value="GO_Central"/>
</dbReference>
<dbReference type="GO" id="GO:0050136">
    <property type="term" value="F:NADH:ubiquinone reductase (non-electrogenic) activity"/>
    <property type="evidence" value="ECO:0007669"/>
    <property type="project" value="UniProtKB-UniRule"/>
</dbReference>
<dbReference type="GO" id="GO:0048038">
    <property type="term" value="F:quinone binding"/>
    <property type="evidence" value="ECO:0007669"/>
    <property type="project" value="UniProtKB-KW"/>
</dbReference>
<dbReference type="GO" id="GO:0009060">
    <property type="term" value="P:aerobic respiration"/>
    <property type="evidence" value="ECO:0000318"/>
    <property type="project" value="GO_Central"/>
</dbReference>
<dbReference type="GO" id="GO:0015990">
    <property type="term" value="P:electron transport coupled proton transport"/>
    <property type="evidence" value="ECO:0000318"/>
    <property type="project" value="GO_Central"/>
</dbReference>
<dbReference type="FunFam" id="3.40.50.12280:FF:000002">
    <property type="entry name" value="NADH-quinone oxidoreductase subunit B"/>
    <property type="match status" value="1"/>
</dbReference>
<dbReference type="Gene3D" id="3.40.50.12280">
    <property type="match status" value="1"/>
</dbReference>
<dbReference type="HAMAP" id="MF_01356">
    <property type="entry name" value="NDH1_NuoB"/>
    <property type="match status" value="1"/>
</dbReference>
<dbReference type="InterPro" id="IPR006137">
    <property type="entry name" value="NADH_UbQ_OxRdtase-like_20kDa"/>
</dbReference>
<dbReference type="InterPro" id="IPR006138">
    <property type="entry name" value="NADH_UQ_OxRdtase_20Kd_su"/>
</dbReference>
<dbReference type="NCBIfam" id="TIGR01957">
    <property type="entry name" value="nuoB_fam"/>
    <property type="match status" value="1"/>
</dbReference>
<dbReference type="NCBIfam" id="NF005012">
    <property type="entry name" value="PRK06411.1"/>
    <property type="match status" value="1"/>
</dbReference>
<dbReference type="PANTHER" id="PTHR11995">
    <property type="entry name" value="NADH DEHYDROGENASE"/>
    <property type="match status" value="1"/>
</dbReference>
<dbReference type="PANTHER" id="PTHR11995:SF14">
    <property type="entry name" value="NADH DEHYDROGENASE [UBIQUINONE] IRON-SULFUR PROTEIN 7, MITOCHONDRIAL"/>
    <property type="match status" value="1"/>
</dbReference>
<dbReference type="Pfam" id="PF01058">
    <property type="entry name" value="Oxidored_q6"/>
    <property type="match status" value="1"/>
</dbReference>
<dbReference type="SUPFAM" id="SSF56770">
    <property type="entry name" value="HydA/Nqo6-like"/>
    <property type="match status" value="1"/>
</dbReference>
<dbReference type="PROSITE" id="PS01150">
    <property type="entry name" value="COMPLEX1_20K"/>
    <property type="match status" value="1"/>
</dbReference>
<reference key="1">
    <citation type="journal article" date="1998" name="Nature">
        <title>The complete genome of the hyperthermophilic bacterium Aquifex aeolicus.</title>
        <authorList>
            <person name="Deckert G."/>
            <person name="Warren P.V."/>
            <person name="Gaasterland T."/>
            <person name="Young W.G."/>
            <person name="Lenox A.L."/>
            <person name="Graham D.E."/>
            <person name="Overbeek R."/>
            <person name="Snead M.A."/>
            <person name="Keller M."/>
            <person name="Aujay M."/>
            <person name="Huber R."/>
            <person name="Feldman R.A."/>
            <person name="Short J.M."/>
            <person name="Olsen G.J."/>
            <person name="Swanson R.V."/>
        </authorList>
    </citation>
    <scope>NUCLEOTIDE SEQUENCE [LARGE SCALE GENOMIC DNA]</scope>
    <source>
        <strain>VF5</strain>
    </source>
</reference>
<name>NUOB_AQUAE</name>
<feature type="chain" id="PRO_0000118764" description="NADH-quinone oxidoreductase subunit B">
    <location>
        <begin position="1"/>
        <end position="179"/>
    </location>
</feature>
<feature type="binding site" evidence="2">
    <location>
        <position position="35"/>
    </location>
    <ligand>
        <name>[4Fe-4S] cluster</name>
        <dbReference type="ChEBI" id="CHEBI:49883"/>
    </ligand>
</feature>
<feature type="binding site" evidence="2">
    <location>
        <position position="36"/>
    </location>
    <ligand>
        <name>[4Fe-4S] cluster</name>
        <dbReference type="ChEBI" id="CHEBI:49883"/>
    </ligand>
</feature>
<feature type="binding site" evidence="2">
    <location>
        <position position="100"/>
    </location>
    <ligand>
        <name>[4Fe-4S] cluster</name>
        <dbReference type="ChEBI" id="CHEBI:49883"/>
    </ligand>
</feature>
<feature type="binding site" evidence="2">
    <location>
        <position position="129"/>
    </location>
    <ligand>
        <name>[4Fe-4S] cluster</name>
        <dbReference type="ChEBI" id="CHEBI:49883"/>
    </ligand>
</feature>
<feature type="strand" evidence="3">
    <location>
        <begin position="28"/>
        <end position="32"/>
    </location>
</feature>
<feature type="helix" evidence="3">
    <location>
        <begin position="35"/>
        <end position="44"/>
    </location>
</feature>
<feature type="turn" evidence="3">
    <location>
        <begin position="46"/>
        <end position="48"/>
    </location>
</feature>
<feature type="turn" evidence="3">
    <location>
        <begin position="50"/>
        <end position="53"/>
    </location>
</feature>
<feature type="helix" evidence="3">
    <location>
        <begin position="61"/>
        <end position="63"/>
    </location>
</feature>
<feature type="strand" evidence="3">
    <location>
        <begin position="65"/>
        <end position="71"/>
    </location>
</feature>
<feature type="turn" evidence="3">
    <location>
        <begin position="75"/>
        <end position="77"/>
    </location>
</feature>
<feature type="helix" evidence="3">
    <location>
        <begin position="78"/>
        <end position="86"/>
    </location>
</feature>
<feature type="strand" evidence="3">
    <location>
        <begin position="93"/>
        <end position="97"/>
    </location>
</feature>
<feature type="helix" evidence="3">
    <location>
        <begin position="98"/>
        <end position="103"/>
    </location>
</feature>
<feature type="helix" evidence="3">
    <location>
        <begin position="116"/>
        <end position="118"/>
    </location>
</feature>
<feature type="strand" evidence="3">
    <location>
        <begin position="123"/>
        <end position="126"/>
    </location>
</feature>
<feature type="strand" evidence="3">
    <location>
        <begin position="128"/>
        <end position="130"/>
    </location>
</feature>
<feature type="helix" evidence="3">
    <location>
        <begin position="133"/>
        <end position="148"/>
    </location>
</feature>
<accession>O67334</accession>
<evidence type="ECO:0000250" key="1"/>
<evidence type="ECO:0000255" key="2">
    <source>
        <dbReference type="HAMAP-Rule" id="MF_01356"/>
    </source>
</evidence>
<evidence type="ECO:0007829" key="3">
    <source>
        <dbReference type="PDB" id="7Q5Y"/>
    </source>
</evidence>
<gene>
    <name evidence="2" type="primary">nuoB</name>
    <name type="ordered locus">aq_1312</name>
</gene>
<comment type="function">
    <text evidence="1">NDH-1 shuttles electrons from NADH, via FMN and iron-sulfur (Fe-S) centers, to quinones in the respiratory chain. Couples the redox reaction to proton translocation (for every two electrons transferred, four hydrogen ions are translocated across the cytoplasmic membrane), and thus conserves the redox energy in a proton gradient (By similarity).</text>
</comment>
<comment type="catalytic activity">
    <reaction evidence="2">
        <text>a quinone + NADH + 5 H(+)(in) = a quinol + NAD(+) + 4 H(+)(out)</text>
        <dbReference type="Rhea" id="RHEA:57888"/>
        <dbReference type="ChEBI" id="CHEBI:15378"/>
        <dbReference type="ChEBI" id="CHEBI:24646"/>
        <dbReference type="ChEBI" id="CHEBI:57540"/>
        <dbReference type="ChEBI" id="CHEBI:57945"/>
        <dbReference type="ChEBI" id="CHEBI:132124"/>
    </reaction>
</comment>
<comment type="cofactor">
    <cofactor evidence="2">
        <name>[4Fe-4S] cluster</name>
        <dbReference type="ChEBI" id="CHEBI:49883"/>
    </cofactor>
    <text evidence="2">Binds 1 [4Fe-4S] cluster.</text>
</comment>
<comment type="subunit">
    <text evidence="2">NDH-1 is composed of 14 different subunits. Subunits NuoB, C, D, E, F, and G constitute the peripheral sector of the complex.</text>
</comment>
<comment type="subcellular location">
    <subcellularLocation>
        <location evidence="2">Cell inner membrane</location>
        <topology evidence="2">Peripheral membrane protein</topology>
        <orientation evidence="2">Cytoplasmic side</orientation>
    </subcellularLocation>
</comment>
<comment type="similarity">
    <text evidence="2">Belongs to the complex I 20 kDa subunit family.</text>
</comment>
<organism>
    <name type="scientific">Aquifex aeolicus (strain VF5)</name>
    <dbReference type="NCBI Taxonomy" id="224324"/>
    <lineage>
        <taxon>Bacteria</taxon>
        <taxon>Pseudomonadati</taxon>
        <taxon>Aquificota</taxon>
        <taxon>Aquificia</taxon>
        <taxon>Aquificales</taxon>
        <taxon>Aquificaceae</taxon>
        <taxon>Aquifex</taxon>
    </lineage>
</organism>
<proteinExistence type="evidence at protein level"/>
<keyword id="KW-0002">3D-structure</keyword>
<keyword id="KW-0004">4Fe-4S</keyword>
<keyword id="KW-0997">Cell inner membrane</keyword>
<keyword id="KW-1003">Cell membrane</keyword>
<keyword id="KW-0408">Iron</keyword>
<keyword id="KW-0411">Iron-sulfur</keyword>
<keyword id="KW-0472">Membrane</keyword>
<keyword id="KW-0479">Metal-binding</keyword>
<keyword id="KW-0520">NAD</keyword>
<keyword id="KW-0874">Quinone</keyword>
<keyword id="KW-1185">Reference proteome</keyword>
<keyword id="KW-1278">Translocase</keyword>
<keyword id="KW-0813">Transport</keyword>
<keyword id="KW-0830">Ubiquinone</keyword>